<dbReference type="EMBL" id="CP000822">
    <property type="protein sequence ID" value="ABV15268.1"/>
    <property type="molecule type" value="Genomic_DNA"/>
</dbReference>
<dbReference type="RefSeq" id="WP_012134953.1">
    <property type="nucleotide sequence ID" value="NC_009792.1"/>
</dbReference>
<dbReference type="SMR" id="A8AP55"/>
<dbReference type="STRING" id="290338.CKO_04207"/>
<dbReference type="GeneID" id="45137822"/>
<dbReference type="KEGG" id="cko:CKO_04207"/>
<dbReference type="HOGENOM" id="CLU_047399_0_0_6"/>
<dbReference type="OrthoDB" id="9803968at2"/>
<dbReference type="Proteomes" id="UP000008148">
    <property type="component" value="Chromosome"/>
</dbReference>
<dbReference type="GO" id="GO:0005886">
    <property type="term" value="C:plasma membrane"/>
    <property type="evidence" value="ECO:0007669"/>
    <property type="project" value="UniProtKB-SubCell"/>
</dbReference>
<dbReference type="GO" id="GO:0051978">
    <property type="term" value="F:lysophospholipid:sodium symporter activity"/>
    <property type="evidence" value="ECO:0007669"/>
    <property type="project" value="InterPro"/>
</dbReference>
<dbReference type="CDD" id="cd06173">
    <property type="entry name" value="MFS_MefA_like"/>
    <property type="match status" value="1"/>
</dbReference>
<dbReference type="Gene3D" id="1.20.1250.20">
    <property type="entry name" value="MFS general substrate transporter like domains"/>
    <property type="match status" value="1"/>
</dbReference>
<dbReference type="HAMAP" id="MF_01585">
    <property type="entry name" value="MFS_LplT"/>
    <property type="match status" value="1"/>
</dbReference>
<dbReference type="InterPro" id="IPR023727">
    <property type="entry name" value="LysoPLipid__transptr_LplT"/>
</dbReference>
<dbReference type="InterPro" id="IPR011701">
    <property type="entry name" value="MFS"/>
</dbReference>
<dbReference type="InterPro" id="IPR036259">
    <property type="entry name" value="MFS_trans_sf"/>
</dbReference>
<dbReference type="NCBIfam" id="NF008397">
    <property type="entry name" value="PRK11195.1"/>
    <property type="match status" value="1"/>
</dbReference>
<dbReference type="PANTHER" id="PTHR43266">
    <property type="entry name" value="MACROLIDE-EFFLUX PROTEIN"/>
    <property type="match status" value="1"/>
</dbReference>
<dbReference type="PANTHER" id="PTHR43266:SF2">
    <property type="entry name" value="MAJOR FACILITATOR SUPERFAMILY (MFS) PROFILE DOMAIN-CONTAINING PROTEIN"/>
    <property type="match status" value="1"/>
</dbReference>
<dbReference type="Pfam" id="PF07690">
    <property type="entry name" value="MFS_1"/>
    <property type="match status" value="1"/>
</dbReference>
<dbReference type="SUPFAM" id="SSF103473">
    <property type="entry name" value="MFS general substrate transporter"/>
    <property type="match status" value="1"/>
</dbReference>
<gene>
    <name evidence="1" type="primary">lplT</name>
    <name type="ordered locus">CKO_04207</name>
</gene>
<proteinExistence type="inferred from homology"/>
<evidence type="ECO:0000255" key="1">
    <source>
        <dbReference type="HAMAP-Rule" id="MF_01585"/>
    </source>
</evidence>
<keyword id="KW-0997">Cell inner membrane</keyword>
<keyword id="KW-1003">Cell membrane</keyword>
<keyword id="KW-0445">Lipid transport</keyword>
<keyword id="KW-0472">Membrane</keyword>
<keyword id="KW-1185">Reference proteome</keyword>
<keyword id="KW-0812">Transmembrane</keyword>
<keyword id="KW-1133">Transmembrane helix</keyword>
<keyword id="KW-0813">Transport</keyword>
<sequence length="398" mass="41773">MRESVHTNTSIWSKGMMSVIAAQFLSAFGDNALLFATLALLKAQFYPDWSQPILQMVFVGAYILFAPFVGQVADSFAKGRVMMFANGLKLLGAASICFGFNPFVGYTLVGIGAAAYSPAKYGILGELTTGDKLVKANGLMEASTIAAILLGSVAGGVLADWHVIAALVACALAYAGAVVANLFIPKLAAARPGQSWHLRKMVRSFFCACISLWRNGETRFSLVGTSLFWGAGVTLRFLLVLWVPVALGITDNATPTYLNAMVAIGIVVGAGAAAKLVTLETVARCMPAGILIGVVVLIFSLQHALLPAYALLTLIGVLGGFFVVPLNALLQERGKKSVGAGNAIAVQNLGENSAMLLMLGLYSLAVLVGIPVVAIGIGFGGLFALAIAALWIWQRRQM</sequence>
<accession>A8AP55</accession>
<protein>
    <recommendedName>
        <fullName evidence="1">Lysophospholipid transporter LplT</fullName>
    </recommendedName>
</protein>
<name>LPLT_CITK8</name>
<organism>
    <name type="scientific">Citrobacter koseri (strain ATCC BAA-895 / CDC 4225-83 / SGSC4696)</name>
    <dbReference type="NCBI Taxonomy" id="290338"/>
    <lineage>
        <taxon>Bacteria</taxon>
        <taxon>Pseudomonadati</taxon>
        <taxon>Pseudomonadota</taxon>
        <taxon>Gammaproteobacteria</taxon>
        <taxon>Enterobacterales</taxon>
        <taxon>Enterobacteriaceae</taxon>
        <taxon>Citrobacter</taxon>
    </lineage>
</organism>
<reference key="1">
    <citation type="submission" date="2007-08" db="EMBL/GenBank/DDBJ databases">
        <authorList>
            <consortium name="The Citrobacter koseri Genome Sequencing Project"/>
            <person name="McClelland M."/>
            <person name="Sanderson E.K."/>
            <person name="Porwollik S."/>
            <person name="Spieth J."/>
            <person name="Clifton W.S."/>
            <person name="Latreille P."/>
            <person name="Courtney L."/>
            <person name="Wang C."/>
            <person name="Pepin K."/>
            <person name="Bhonagiri V."/>
            <person name="Nash W."/>
            <person name="Johnson M."/>
            <person name="Thiruvilangam P."/>
            <person name="Wilson R."/>
        </authorList>
    </citation>
    <scope>NUCLEOTIDE SEQUENCE [LARGE SCALE GENOMIC DNA]</scope>
    <source>
        <strain>ATCC BAA-895 / CDC 4225-83 / SGSC4696</strain>
    </source>
</reference>
<feature type="chain" id="PRO_1000069308" description="Lysophospholipid transporter LplT">
    <location>
        <begin position="1"/>
        <end position="398"/>
    </location>
</feature>
<feature type="transmembrane region" description="Helical" evidence="1">
    <location>
        <begin position="19"/>
        <end position="39"/>
    </location>
</feature>
<feature type="transmembrane region" description="Helical" evidence="1">
    <location>
        <begin position="53"/>
        <end position="73"/>
    </location>
</feature>
<feature type="transmembrane region" description="Helical" evidence="1">
    <location>
        <begin position="91"/>
        <end position="111"/>
    </location>
</feature>
<feature type="transmembrane region" description="Helical" evidence="1">
    <location>
        <begin position="139"/>
        <end position="159"/>
    </location>
</feature>
<feature type="transmembrane region" description="Helical" evidence="1">
    <location>
        <begin position="164"/>
        <end position="184"/>
    </location>
</feature>
<feature type="transmembrane region" description="Helical" evidence="1">
    <location>
        <begin position="227"/>
        <end position="247"/>
    </location>
</feature>
<feature type="transmembrane region" description="Helical" evidence="1">
    <location>
        <begin position="257"/>
        <end position="277"/>
    </location>
</feature>
<feature type="transmembrane region" description="Helical" evidence="1">
    <location>
        <begin position="281"/>
        <end position="301"/>
    </location>
</feature>
<feature type="transmembrane region" description="Helical" evidence="1">
    <location>
        <begin position="304"/>
        <end position="324"/>
    </location>
</feature>
<feature type="transmembrane region" description="Helical" evidence="1">
    <location>
        <begin position="350"/>
        <end position="370"/>
    </location>
</feature>
<feature type="transmembrane region" description="Helical" evidence="1">
    <location>
        <begin position="372"/>
        <end position="392"/>
    </location>
</feature>
<comment type="function">
    <text evidence="1">Catalyzes the facilitated diffusion of 2-acyl-glycero-3-phosphoethanolamine (2-acyl-GPE) into the cell.</text>
</comment>
<comment type="subcellular location">
    <subcellularLocation>
        <location evidence="1">Cell inner membrane</location>
        <topology evidence="1">Multi-pass membrane protein</topology>
    </subcellularLocation>
</comment>
<comment type="similarity">
    <text evidence="1">Belongs to the major facilitator superfamily. LplT (TC 2.A.1.42) family.</text>
</comment>